<comment type="similarity">
    <text evidence="2">Belongs to the EIF1AD family.</text>
</comment>
<keyword id="KW-1185">Reference proteome</keyword>
<keyword id="KW-0694">RNA-binding</keyword>
<reference key="1">
    <citation type="journal article" date="2000" name="Science">
        <title>The genome sequence of Drosophila melanogaster.</title>
        <authorList>
            <person name="Adams M.D."/>
            <person name="Celniker S.E."/>
            <person name="Holt R.A."/>
            <person name="Evans C.A."/>
            <person name="Gocayne J.D."/>
            <person name="Amanatides P.G."/>
            <person name="Scherer S.E."/>
            <person name="Li P.W."/>
            <person name="Hoskins R.A."/>
            <person name="Galle R.F."/>
            <person name="George R.A."/>
            <person name="Lewis S.E."/>
            <person name="Richards S."/>
            <person name="Ashburner M."/>
            <person name="Henderson S.N."/>
            <person name="Sutton G.G."/>
            <person name="Wortman J.R."/>
            <person name="Yandell M.D."/>
            <person name="Zhang Q."/>
            <person name="Chen L.X."/>
            <person name="Brandon R.C."/>
            <person name="Rogers Y.-H.C."/>
            <person name="Blazej R.G."/>
            <person name="Champe M."/>
            <person name="Pfeiffer B.D."/>
            <person name="Wan K.H."/>
            <person name="Doyle C."/>
            <person name="Baxter E.G."/>
            <person name="Helt G."/>
            <person name="Nelson C.R."/>
            <person name="Miklos G.L.G."/>
            <person name="Abril J.F."/>
            <person name="Agbayani A."/>
            <person name="An H.-J."/>
            <person name="Andrews-Pfannkoch C."/>
            <person name="Baldwin D."/>
            <person name="Ballew R.M."/>
            <person name="Basu A."/>
            <person name="Baxendale J."/>
            <person name="Bayraktaroglu L."/>
            <person name="Beasley E.M."/>
            <person name="Beeson K.Y."/>
            <person name="Benos P.V."/>
            <person name="Berman B.P."/>
            <person name="Bhandari D."/>
            <person name="Bolshakov S."/>
            <person name="Borkova D."/>
            <person name="Botchan M.R."/>
            <person name="Bouck J."/>
            <person name="Brokstein P."/>
            <person name="Brottier P."/>
            <person name="Burtis K.C."/>
            <person name="Busam D.A."/>
            <person name="Butler H."/>
            <person name="Cadieu E."/>
            <person name="Center A."/>
            <person name="Chandra I."/>
            <person name="Cherry J.M."/>
            <person name="Cawley S."/>
            <person name="Dahlke C."/>
            <person name="Davenport L.B."/>
            <person name="Davies P."/>
            <person name="de Pablos B."/>
            <person name="Delcher A."/>
            <person name="Deng Z."/>
            <person name="Mays A.D."/>
            <person name="Dew I."/>
            <person name="Dietz S.M."/>
            <person name="Dodson K."/>
            <person name="Doup L.E."/>
            <person name="Downes M."/>
            <person name="Dugan-Rocha S."/>
            <person name="Dunkov B.C."/>
            <person name="Dunn P."/>
            <person name="Durbin K.J."/>
            <person name="Evangelista C.C."/>
            <person name="Ferraz C."/>
            <person name="Ferriera S."/>
            <person name="Fleischmann W."/>
            <person name="Fosler C."/>
            <person name="Gabrielian A.E."/>
            <person name="Garg N.S."/>
            <person name="Gelbart W.M."/>
            <person name="Glasser K."/>
            <person name="Glodek A."/>
            <person name="Gong F."/>
            <person name="Gorrell J.H."/>
            <person name="Gu Z."/>
            <person name="Guan P."/>
            <person name="Harris M."/>
            <person name="Harris N.L."/>
            <person name="Harvey D.A."/>
            <person name="Heiman T.J."/>
            <person name="Hernandez J.R."/>
            <person name="Houck J."/>
            <person name="Hostin D."/>
            <person name="Houston K.A."/>
            <person name="Howland T.J."/>
            <person name="Wei M.-H."/>
            <person name="Ibegwam C."/>
            <person name="Jalali M."/>
            <person name="Kalush F."/>
            <person name="Karpen G.H."/>
            <person name="Ke Z."/>
            <person name="Kennison J.A."/>
            <person name="Ketchum K.A."/>
            <person name="Kimmel B.E."/>
            <person name="Kodira C.D."/>
            <person name="Kraft C.L."/>
            <person name="Kravitz S."/>
            <person name="Kulp D."/>
            <person name="Lai Z."/>
            <person name="Lasko P."/>
            <person name="Lei Y."/>
            <person name="Levitsky A.A."/>
            <person name="Li J.H."/>
            <person name="Li Z."/>
            <person name="Liang Y."/>
            <person name="Lin X."/>
            <person name="Liu X."/>
            <person name="Mattei B."/>
            <person name="McIntosh T.C."/>
            <person name="McLeod M.P."/>
            <person name="McPherson D."/>
            <person name="Merkulov G."/>
            <person name="Milshina N.V."/>
            <person name="Mobarry C."/>
            <person name="Morris J."/>
            <person name="Moshrefi A."/>
            <person name="Mount S.M."/>
            <person name="Moy M."/>
            <person name="Murphy B."/>
            <person name="Murphy L."/>
            <person name="Muzny D.M."/>
            <person name="Nelson D.L."/>
            <person name="Nelson D.R."/>
            <person name="Nelson K.A."/>
            <person name="Nixon K."/>
            <person name="Nusskern D.R."/>
            <person name="Pacleb J.M."/>
            <person name="Palazzolo M."/>
            <person name="Pittman G.S."/>
            <person name="Pan S."/>
            <person name="Pollard J."/>
            <person name="Puri V."/>
            <person name="Reese M.G."/>
            <person name="Reinert K."/>
            <person name="Remington K."/>
            <person name="Saunders R.D.C."/>
            <person name="Scheeler F."/>
            <person name="Shen H."/>
            <person name="Shue B.C."/>
            <person name="Siden-Kiamos I."/>
            <person name="Simpson M."/>
            <person name="Skupski M.P."/>
            <person name="Smith T.J."/>
            <person name="Spier E."/>
            <person name="Spradling A.C."/>
            <person name="Stapleton M."/>
            <person name="Strong R."/>
            <person name="Sun E."/>
            <person name="Svirskas R."/>
            <person name="Tector C."/>
            <person name="Turner R."/>
            <person name="Venter E."/>
            <person name="Wang A.H."/>
            <person name="Wang X."/>
            <person name="Wang Z.-Y."/>
            <person name="Wassarman D.A."/>
            <person name="Weinstock G.M."/>
            <person name="Weissenbach J."/>
            <person name="Williams S.M."/>
            <person name="Woodage T."/>
            <person name="Worley K.C."/>
            <person name="Wu D."/>
            <person name="Yang S."/>
            <person name="Yao Q.A."/>
            <person name="Ye J."/>
            <person name="Yeh R.-F."/>
            <person name="Zaveri J.S."/>
            <person name="Zhan M."/>
            <person name="Zhang G."/>
            <person name="Zhao Q."/>
            <person name="Zheng L."/>
            <person name="Zheng X.H."/>
            <person name="Zhong F.N."/>
            <person name="Zhong W."/>
            <person name="Zhou X."/>
            <person name="Zhu S.C."/>
            <person name="Zhu X."/>
            <person name="Smith H.O."/>
            <person name="Gibbs R.A."/>
            <person name="Myers E.W."/>
            <person name="Rubin G.M."/>
            <person name="Venter J.C."/>
        </authorList>
    </citation>
    <scope>NUCLEOTIDE SEQUENCE [LARGE SCALE GENOMIC DNA]</scope>
    <source>
        <strain>Berkeley</strain>
    </source>
</reference>
<reference key="2">
    <citation type="journal article" date="2002" name="Genome Biol.">
        <title>Annotation of the Drosophila melanogaster euchromatic genome: a systematic review.</title>
        <authorList>
            <person name="Misra S."/>
            <person name="Crosby M.A."/>
            <person name="Mungall C.J."/>
            <person name="Matthews B.B."/>
            <person name="Campbell K.S."/>
            <person name="Hradecky P."/>
            <person name="Huang Y."/>
            <person name="Kaminker J.S."/>
            <person name="Millburn G.H."/>
            <person name="Prochnik S.E."/>
            <person name="Smith C.D."/>
            <person name="Tupy J.L."/>
            <person name="Whitfield E.J."/>
            <person name="Bayraktaroglu L."/>
            <person name="Berman B.P."/>
            <person name="Bettencourt B.R."/>
            <person name="Celniker S.E."/>
            <person name="de Grey A.D.N.J."/>
            <person name="Drysdale R.A."/>
            <person name="Harris N.L."/>
            <person name="Richter J."/>
            <person name="Russo S."/>
            <person name="Schroeder A.J."/>
            <person name="Shu S.Q."/>
            <person name="Stapleton M."/>
            <person name="Yamada C."/>
            <person name="Ashburner M."/>
            <person name="Gelbart W.M."/>
            <person name="Rubin G.M."/>
            <person name="Lewis S.E."/>
        </authorList>
    </citation>
    <scope>GENOME REANNOTATION</scope>
    <source>
        <strain>Berkeley</strain>
    </source>
</reference>
<reference key="3">
    <citation type="journal article" date="2002" name="Genome Biol.">
        <title>A Drosophila full-length cDNA resource.</title>
        <authorList>
            <person name="Stapleton M."/>
            <person name="Carlson J.W."/>
            <person name="Brokstein P."/>
            <person name="Yu C."/>
            <person name="Champe M."/>
            <person name="George R.A."/>
            <person name="Guarin H."/>
            <person name="Kronmiller B."/>
            <person name="Pacleb J.M."/>
            <person name="Park S."/>
            <person name="Wan K.H."/>
            <person name="Rubin G.M."/>
            <person name="Celniker S.E."/>
        </authorList>
    </citation>
    <scope>NUCLEOTIDE SEQUENCE [LARGE SCALE MRNA]</scope>
    <source>
        <strain>Berkeley</strain>
    </source>
</reference>
<feature type="chain" id="PRO_0000314162" description="Probable RNA-binding protein EIF1AD">
    <location>
        <begin position="1"/>
        <end position="159"/>
    </location>
</feature>
<feature type="domain" description="S1-like">
    <location>
        <begin position="18"/>
        <end position="93"/>
    </location>
</feature>
<feature type="region of interest" description="Disordered" evidence="1">
    <location>
        <begin position="109"/>
        <end position="159"/>
    </location>
</feature>
<feature type="compositionally biased region" description="Acidic residues" evidence="1">
    <location>
        <begin position="146"/>
        <end position="159"/>
    </location>
</feature>
<organism>
    <name type="scientific">Drosophila melanogaster</name>
    <name type="common">Fruit fly</name>
    <dbReference type="NCBI Taxonomy" id="7227"/>
    <lineage>
        <taxon>Eukaryota</taxon>
        <taxon>Metazoa</taxon>
        <taxon>Ecdysozoa</taxon>
        <taxon>Arthropoda</taxon>
        <taxon>Hexapoda</taxon>
        <taxon>Insecta</taxon>
        <taxon>Pterygota</taxon>
        <taxon>Neoptera</taxon>
        <taxon>Endopterygota</taxon>
        <taxon>Diptera</taxon>
        <taxon>Brachycera</taxon>
        <taxon>Muscomorpha</taxon>
        <taxon>Ephydroidea</taxon>
        <taxon>Drosophilidae</taxon>
        <taxon>Drosophila</taxon>
        <taxon>Sophophora</taxon>
    </lineage>
</organism>
<protein>
    <recommendedName>
        <fullName>Probable RNA-binding protein EIF1AD</fullName>
    </recommendedName>
    <alternativeName>
        <fullName>Eukaryotic translation initiation factor 1A domain-containing protein</fullName>
    </alternativeName>
</protein>
<name>EIF1A_DROME</name>
<evidence type="ECO:0000256" key="1">
    <source>
        <dbReference type="SAM" id="MobiDB-lite"/>
    </source>
</evidence>
<evidence type="ECO:0000305" key="2"/>
<sequence>MHRSHPSISRRKHLMKEMMEDDYALPTETQQIARVISSRGNNLHEVETVDETFLVSMPNKFRKSMWVKRGDFLLVEPIEEGDKVKAEICKILTPEHIKEYTKAAIWPDKFTKKPVQEEATSQNKDDSDFEDDLLPNTNRPVNRDSSDEEEDEETSSEED</sequence>
<gene>
    <name type="ORF">CG31957</name>
</gene>
<proteinExistence type="evidence at transcript level"/>
<dbReference type="EMBL" id="AE014134">
    <property type="protein sequence ID" value="AAN10365.1"/>
    <property type="molecule type" value="Genomic_DNA"/>
</dbReference>
<dbReference type="EMBL" id="BT025911">
    <property type="protein sequence ID" value="ABG02155.1"/>
    <property type="molecule type" value="mRNA"/>
</dbReference>
<dbReference type="RefSeq" id="NP_001260011.1">
    <property type="nucleotide sequence ID" value="NM_001273082.1"/>
</dbReference>
<dbReference type="RefSeq" id="NP_722949.1">
    <property type="nucleotide sequence ID" value="NM_164564.3"/>
</dbReference>
<dbReference type="SMR" id="Q8IQ13"/>
<dbReference type="BioGRID" id="77325">
    <property type="interactions" value="2"/>
</dbReference>
<dbReference type="FunCoup" id="Q8IQ13">
    <property type="interactions" value="2078"/>
</dbReference>
<dbReference type="STRING" id="7227.FBpp0306862"/>
<dbReference type="PaxDb" id="7227-FBpp0077203"/>
<dbReference type="DNASU" id="319046"/>
<dbReference type="EnsemblMetazoa" id="FBtr0077514">
    <property type="protein sequence ID" value="FBpp0077203"/>
    <property type="gene ID" value="FBgn0051957"/>
</dbReference>
<dbReference type="EnsemblMetazoa" id="FBtr0334833">
    <property type="protein sequence ID" value="FBpp0306862"/>
    <property type="gene ID" value="FBgn0051957"/>
</dbReference>
<dbReference type="GeneID" id="319046"/>
<dbReference type="KEGG" id="dme:Dmel_CG31957"/>
<dbReference type="UCSC" id="CG31957-RA">
    <property type="organism name" value="d. melanogaster"/>
</dbReference>
<dbReference type="AGR" id="FB:FBgn0051957"/>
<dbReference type="FlyBase" id="FBgn0051957">
    <property type="gene designation" value="CG31957"/>
</dbReference>
<dbReference type="VEuPathDB" id="VectorBase:FBgn0051957"/>
<dbReference type="eggNOG" id="KOG2925">
    <property type="taxonomic scope" value="Eukaryota"/>
</dbReference>
<dbReference type="GeneTree" id="ENSGT00390000011180"/>
<dbReference type="HOGENOM" id="CLU_106477_2_0_1"/>
<dbReference type="InParanoid" id="Q8IQ13"/>
<dbReference type="OMA" id="PNRMQAP"/>
<dbReference type="OrthoDB" id="1738325at2759"/>
<dbReference type="PhylomeDB" id="Q8IQ13"/>
<dbReference type="BioGRID-ORCS" id="319046">
    <property type="hits" value="1 hit in 1 CRISPR screen"/>
</dbReference>
<dbReference type="ChiTaRS" id="CG31957">
    <property type="organism name" value="fly"/>
</dbReference>
<dbReference type="GenomeRNAi" id="319046"/>
<dbReference type="PRO" id="PR:Q8IQ13"/>
<dbReference type="Proteomes" id="UP000000803">
    <property type="component" value="Chromosome 2L"/>
</dbReference>
<dbReference type="Bgee" id="FBgn0051957">
    <property type="expression patterns" value="Expressed in adult abdomen and 76 other cell types or tissues"/>
</dbReference>
<dbReference type="ExpressionAtlas" id="Q8IQ13">
    <property type="expression patterns" value="baseline and differential"/>
</dbReference>
<dbReference type="GO" id="GO:0005634">
    <property type="term" value="C:nucleus"/>
    <property type="evidence" value="ECO:0000318"/>
    <property type="project" value="GO_Central"/>
</dbReference>
<dbReference type="GO" id="GO:0003723">
    <property type="term" value="F:RNA binding"/>
    <property type="evidence" value="ECO:0007669"/>
    <property type="project" value="UniProtKB-KW"/>
</dbReference>
<dbReference type="GO" id="GO:0003743">
    <property type="term" value="F:translation initiation factor activity"/>
    <property type="evidence" value="ECO:0007669"/>
    <property type="project" value="InterPro"/>
</dbReference>
<dbReference type="Gene3D" id="2.40.50.140">
    <property type="entry name" value="Nucleic acid-binding proteins"/>
    <property type="match status" value="1"/>
</dbReference>
<dbReference type="InterPro" id="IPR039294">
    <property type="entry name" value="EIF1AD"/>
</dbReference>
<dbReference type="InterPro" id="IPR012340">
    <property type="entry name" value="NA-bd_OB-fold"/>
</dbReference>
<dbReference type="InterPro" id="IPR006196">
    <property type="entry name" value="RNA-binding_domain_S1_IF1"/>
</dbReference>
<dbReference type="InterPro" id="IPR001253">
    <property type="entry name" value="TIF_eIF-1A"/>
</dbReference>
<dbReference type="PANTHER" id="PTHR21641:SF0">
    <property type="entry name" value="RNA-BINDING PROTEIN EIF1AD-RELATED"/>
    <property type="match status" value="1"/>
</dbReference>
<dbReference type="PANTHER" id="PTHR21641">
    <property type="entry name" value="TRANSLATION INITIATION FACTOR-RELATED"/>
    <property type="match status" value="1"/>
</dbReference>
<dbReference type="Pfam" id="PF01176">
    <property type="entry name" value="eIF-1a"/>
    <property type="match status" value="1"/>
</dbReference>
<dbReference type="SMART" id="SM00652">
    <property type="entry name" value="eIF1a"/>
    <property type="match status" value="1"/>
</dbReference>
<dbReference type="SUPFAM" id="SSF50249">
    <property type="entry name" value="Nucleic acid-binding proteins"/>
    <property type="match status" value="1"/>
</dbReference>
<accession>Q8IQ13</accession>